<feature type="initiator methionine" description="Removed" evidence="2">
    <location>
        <position position="1"/>
    </location>
</feature>
<feature type="chain" id="PRO_0000207464" description="ADP-ribosylation factor-like protein 4D">
    <location>
        <begin position="2"/>
        <end position="201"/>
    </location>
</feature>
<feature type="binding site" evidence="1">
    <location>
        <begin position="28"/>
        <end position="35"/>
    </location>
    <ligand>
        <name>GTP</name>
        <dbReference type="ChEBI" id="CHEBI:37565"/>
    </ligand>
</feature>
<feature type="binding site" evidence="1">
    <location>
        <begin position="76"/>
        <end position="80"/>
    </location>
    <ligand>
        <name>GTP</name>
        <dbReference type="ChEBI" id="CHEBI:37565"/>
    </ligand>
</feature>
<feature type="binding site" evidence="1">
    <location>
        <begin position="135"/>
        <end position="138"/>
    </location>
    <ligand>
        <name>GTP</name>
        <dbReference type="ChEBI" id="CHEBI:37565"/>
    </ligand>
</feature>
<feature type="lipid moiety-binding region" description="N-myristoyl glycine" evidence="2">
    <location>
        <position position="2"/>
    </location>
</feature>
<feature type="sequence variant" id="VAR_028205" description="In dbSNP:rs1059968." evidence="4">
    <original>T</original>
    <variation>N</variation>
    <location>
        <position position="91"/>
    </location>
</feature>
<proteinExistence type="evidence at protein level"/>
<name>ARL4D_HUMAN</name>
<organism>
    <name type="scientific">Homo sapiens</name>
    <name type="common">Human</name>
    <dbReference type="NCBI Taxonomy" id="9606"/>
    <lineage>
        <taxon>Eukaryota</taxon>
        <taxon>Metazoa</taxon>
        <taxon>Chordata</taxon>
        <taxon>Craniata</taxon>
        <taxon>Vertebrata</taxon>
        <taxon>Euteleostomi</taxon>
        <taxon>Mammalia</taxon>
        <taxon>Eutheria</taxon>
        <taxon>Euarchontoglires</taxon>
        <taxon>Primates</taxon>
        <taxon>Haplorrhini</taxon>
        <taxon>Catarrhini</taxon>
        <taxon>Hominidae</taxon>
        <taxon>Homo</taxon>
    </lineage>
</organism>
<comment type="function">
    <text evidence="3">Small GTP-binding protein which cycles between an inactive GDP-bound and an active GTP-bound form, and the rate of cycling is regulated by guanine nucleotide exchange factors (GEF) and GTPase-activating proteins (GAP). GTP-binding protein that does not act as an allosteric activator of the cholera toxin catalytic subunit. Recruits CYTH1, CYTH2, CYTH3 and CYTH4 to the plasma membrane in GDP-bound form.</text>
</comment>
<comment type="subunit">
    <text evidence="3">Interacts with CYTH2; the interaction is direct and ARL4D GTP-dependent. Does not interact with ARL4D.</text>
</comment>
<comment type="interaction">
    <interactant intactId="EBI-711726">
        <id>P49703</id>
    </interactant>
    <interactant intactId="EBI-10171570">
        <id>Q68D86</id>
        <label>CCDC102B</label>
    </interactant>
    <organismsDiffer>false</organismsDiffer>
    <experiments>4</experiments>
</comment>
<comment type="subcellular location">
    <subcellularLocation>
        <location evidence="1">Nucleus</location>
        <location evidence="1">Nucleolus</location>
    </subcellularLocation>
    <subcellularLocation>
        <location evidence="3">Cell membrane</location>
    </subcellularLocation>
    <subcellularLocation>
        <location evidence="3">Nucleus</location>
    </subcellularLocation>
    <subcellularLocation>
        <location evidence="3">Cytoplasm</location>
    </subcellularLocation>
</comment>
<comment type="similarity">
    <text evidence="5">Belongs to the small GTPase superfamily. Arf family.</text>
</comment>
<keyword id="KW-1003">Cell membrane</keyword>
<keyword id="KW-0963">Cytoplasm</keyword>
<keyword id="KW-0342">GTP-binding</keyword>
<keyword id="KW-0449">Lipoprotein</keyword>
<keyword id="KW-0472">Membrane</keyword>
<keyword id="KW-0519">Myristate</keyword>
<keyword id="KW-0547">Nucleotide-binding</keyword>
<keyword id="KW-0539">Nucleus</keyword>
<keyword id="KW-1267">Proteomics identification</keyword>
<keyword id="KW-1185">Reference proteome</keyword>
<protein>
    <recommendedName>
        <fullName>ADP-ribosylation factor-like protein 4D</fullName>
    </recommendedName>
    <alternativeName>
        <fullName>ADP-ribosylation factor-like protein 4L</fullName>
    </alternativeName>
</protein>
<dbReference type="EMBL" id="L38490">
    <property type="protein sequence ID" value="AAA57126.1"/>
    <property type="molecule type" value="mRNA"/>
</dbReference>
<dbReference type="EMBL" id="U25771">
    <property type="protein sequence ID" value="AAA93229.1"/>
    <property type="molecule type" value="mRNA"/>
</dbReference>
<dbReference type="EMBL" id="AB060692">
    <property type="protein sequence ID" value="BAB91080.1"/>
    <property type="molecule type" value="mRNA"/>
</dbReference>
<dbReference type="EMBL" id="AK314951">
    <property type="protein sequence ID" value="BAG37456.1"/>
    <property type="molecule type" value="mRNA"/>
</dbReference>
<dbReference type="EMBL" id="CH471178">
    <property type="protein sequence ID" value="EAW51681.1"/>
    <property type="molecule type" value="Genomic_DNA"/>
</dbReference>
<dbReference type="EMBL" id="CH471178">
    <property type="protein sequence ID" value="EAW51682.1"/>
    <property type="molecule type" value="Genomic_DNA"/>
</dbReference>
<dbReference type="EMBL" id="BC000043">
    <property type="protein sequence ID" value="AAH00043.1"/>
    <property type="molecule type" value="mRNA"/>
</dbReference>
<dbReference type="CCDS" id="CCDS11463.1"/>
<dbReference type="PIR" id="A57646">
    <property type="entry name" value="A57646"/>
</dbReference>
<dbReference type="RefSeq" id="NP_001652.2">
    <property type="nucleotide sequence ID" value="NM_001661.3"/>
</dbReference>
<dbReference type="RefSeq" id="XP_011523084.1">
    <property type="nucleotide sequence ID" value="XM_011524782.3"/>
</dbReference>
<dbReference type="RefSeq" id="XP_054171996.1">
    <property type="nucleotide sequence ID" value="XM_054316021.1"/>
</dbReference>
<dbReference type="SMR" id="P49703"/>
<dbReference type="BioGRID" id="106874">
    <property type="interactions" value="150"/>
</dbReference>
<dbReference type="FunCoup" id="P49703">
    <property type="interactions" value="226"/>
</dbReference>
<dbReference type="IntAct" id="P49703">
    <property type="interactions" value="46"/>
</dbReference>
<dbReference type="MINT" id="P49703"/>
<dbReference type="STRING" id="9606.ENSP00000322628"/>
<dbReference type="iPTMnet" id="P49703"/>
<dbReference type="PhosphoSitePlus" id="P49703"/>
<dbReference type="BioMuta" id="ARL4D"/>
<dbReference type="DMDM" id="116241256"/>
<dbReference type="jPOST" id="P49703"/>
<dbReference type="MassIVE" id="P49703"/>
<dbReference type="PaxDb" id="9606-ENSP00000322628"/>
<dbReference type="PeptideAtlas" id="P49703"/>
<dbReference type="Antibodypedia" id="29560">
    <property type="antibodies" value="120 antibodies from 26 providers"/>
</dbReference>
<dbReference type="DNASU" id="379"/>
<dbReference type="Ensembl" id="ENST00000320033.5">
    <property type="protein sequence ID" value="ENSP00000322628.2"/>
    <property type="gene ID" value="ENSG00000175906.5"/>
</dbReference>
<dbReference type="GeneID" id="379"/>
<dbReference type="KEGG" id="hsa:379"/>
<dbReference type="MANE-Select" id="ENST00000320033.5">
    <property type="protein sequence ID" value="ENSP00000322628.2"/>
    <property type="RefSeq nucleotide sequence ID" value="NM_001661.4"/>
    <property type="RefSeq protein sequence ID" value="NP_001652.2"/>
</dbReference>
<dbReference type="UCSC" id="uc002idt.4">
    <property type="organism name" value="human"/>
</dbReference>
<dbReference type="AGR" id="HGNC:656"/>
<dbReference type="CTD" id="379"/>
<dbReference type="GeneCards" id="ARL4D"/>
<dbReference type="HGNC" id="HGNC:656">
    <property type="gene designation" value="ARL4D"/>
</dbReference>
<dbReference type="HPA" id="ENSG00000175906">
    <property type="expression patterns" value="Low tissue specificity"/>
</dbReference>
<dbReference type="MIM" id="600732">
    <property type="type" value="gene"/>
</dbReference>
<dbReference type="neXtProt" id="NX_P49703"/>
<dbReference type="OpenTargets" id="ENSG00000175906"/>
<dbReference type="PharmGKB" id="PA24938"/>
<dbReference type="VEuPathDB" id="HostDB:ENSG00000175906"/>
<dbReference type="eggNOG" id="KOG0070">
    <property type="taxonomic scope" value="Eukaryota"/>
</dbReference>
<dbReference type="GeneTree" id="ENSGT00940000161341"/>
<dbReference type="HOGENOM" id="CLU_040729_9_2_1"/>
<dbReference type="InParanoid" id="P49703"/>
<dbReference type="OMA" id="YTLHHVQ"/>
<dbReference type="OrthoDB" id="2011769at2759"/>
<dbReference type="PAN-GO" id="P49703">
    <property type="GO annotations" value="5 GO annotations based on evolutionary models"/>
</dbReference>
<dbReference type="PhylomeDB" id="P49703"/>
<dbReference type="TreeFam" id="TF105464"/>
<dbReference type="PathwayCommons" id="P49703"/>
<dbReference type="SignaLink" id="P49703"/>
<dbReference type="BioGRID-ORCS" id="379">
    <property type="hits" value="138 hits in 1146 CRISPR screens"/>
</dbReference>
<dbReference type="ChiTaRS" id="ARL4D">
    <property type="organism name" value="human"/>
</dbReference>
<dbReference type="GeneWiki" id="ARL4D"/>
<dbReference type="GenomeRNAi" id="379"/>
<dbReference type="Pharos" id="P49703">
    <property type="development level" value="Tbio"/>
</dbReference>
<dbReference type="PRO" id="PR:P49703"/>
<dbReference type="Proteomes" id="UP000005640">
    <property type="component" value="Chromosome 17"/>
</dbReference>
<dbReference type="RNAct" id="P49703">
    <property type="molecule type" value="protein"/>
</dbReference>
<dbReference type="Bgee" id="ENSG00000175906">
    <property type="expression patterns" value="Expressed in pharyngeal mucosa and 184 other cell types or tissues"/>
</dbReference>
<dbReference type="GO" id="GO:0005737">
    <property type="term" value="C:cytoplasm"/>
    <property type="evidence" value="ECO:0000314"/>
    <property type="project" value="UniProtKB"/>
</dbReference>
<dbReference type="GO" id="GO:0005730">
    <property type="term" value="C:nucleolus"/>
    <property type="evidence" value="ECO:0007669"/>
    <property type="project" value="UniProtKB-SubCell"/>
</dbReference>
<dbReference type="GO" id="GO:0005886">
    <property type="term" value="C:plasma membrane"/>
    <property type="evidence" value="ECO:0000314"/>
    <property type="project" value="UniProtKB"/>
</dbReference>
<dbReference type="GO" id="GO:0005525">
    <property type="term" value="F:GTP binding"/>
    <property type="evidence" value="ECO:0000318"/>
    <property type="project" value="GO_Central"/>
</dbReference>
<dbReference type="GO" id="GO:0003924">
    <property type="term" value="F:GTPase activity"/>
    <property type="evidence" value="ECO:0000304"/>
    <property type="project" value="ProtInc"/>
</dbReference>
<dbReference type="GO" id="GO:0006886">
    <property type="term" value="P:intracellular protein transport"/>
    <property type="evidence" value="ECO:0000318"/>
    <property type="project" value="GO_Central"/>
</dbReference>
<dbReference type="GO" id="GO:0009306">
    <property type="term" value="P:protein secretion"/>
    <property type="evidence" value="ECO:0000304"/>
    <property type="project" value="ProtInc"/>
</dbReference>
<dbReference type="GO" id="GO:0016192">
    <property type="term" value="P:vesicle-mediated transport"/>
    <property type="evidence" value="ECO:0000318"/>
    <property type="project" value="GO_Central"/>
</dbReference>
<dbReference type="FunFam" id="3.40.50.300:FF:000458">
    <property type="entry name" value="ADP-ribosylation factor-like protein 4C"/>
    <property type="match status" value="1"/>
</dbReference>
<dbReference type="Gene3D" id="3.40.50.300">
    <property type="entry name" value="P-loop containing nucleotide triphosphate hydrolases"/>
    <property type="match status" value="1"/>
</dbReference>
<dbReference type="InterPro" id="IPR027417">
    <property type="entry name" value="P-loop_NTPase"/>
</dbReference>
<dbReference type="InterPro" id="IPR005225">
    <property type="entry name" value="Small_GTP-bd"/>
</dbReference>
<dbReference type="InterPro" id="IPR024156">
    <property type="entry name" value="Small_GTPase_ARF"/>
</dbReference>
<dbReference type="InterPro" id="IPR006689">
    <property type="entry name" value="Small_GTPase_ARF/SAR"/>
</dbReference>
<dbReference type="NCBIfam" id="TIGR00231">
    <property type="entry name" value="small_GTP"/>
    <property type="match status" value="1"/>
</dbReference>
<dbReference type="PANTHER" id="PTHR11711">
    <property type="entry name" value="ADP RIBOSYLATION FACTOR-RELATED"/>
    <property type="match status" value="1"/>
</dbReference>
<dbReference type="Pfam" id="PF00025">
    <property type="entry name" value="Arf"/>
    <property type="match status" value="1"/>
</dbReference>
<dbReference type="PRINTS" id="PR00328">
    <property type="entry name" value="SAR1GTPBP"/>
</dbReference>
<dbReference type="SMART" id="SM00177">
    <property type="entry name" value="ARF"/>
    <property type="match status" value="1"/>
</dbReference>
<dbReference type="SMART" id="SM00175">
    <property type="entry name" value="RAB"/>
    <property type="match status" value="1"/>
</dbReference>
<dbReference type="SMART" id="SM00173">
    <property type="entry name" value="RAS"/>
    <property type="match status" value="1"/>
</dbReference>
<dbReference type="SMART" id="SM00178">
    <property type="entry name" value="SAR"/>
    <property type="match status" value="1"/>
</dbReference>
<dbReference type="SUPFAM" id="SSF52540">
    <property type="entry name" value="P-loop containing nucleoside triphosphate hydrolases"/>
    <property type="match status" value="1"/>
</dbReference>
<dbReference type="PROSITE" id="PS51417">
    <property type="entry name" value="ARF"/>
    <property type="match status" value="1"/>
</dbReference>
<accession>P49703</accession>
<accession>B2RC59</accession>
<accession>D3DX43</accession>
<reference key="1">
    <citation type="journal article" date="1995" name="Genomics">
        <title>Isolation and mapping of a gene encoding a novel human ADP-ribosylation factor on chromosome 17q12-q21.</title>
        <authorList>
            <person name="Smith S.A."/>
            <person name="Holik P.R."/>
            <person name="Stevens J."/>
            <person name="Melis R."/>
            <person name="White R."/>
            <person name="Albertsen H."/>
        </authorList>
    </citation>
    <scope>NUCLEOTIDE SEQUENCE [MRNA]</scope>
    <scope>VARIANT ASN-91</scope>
    <source>
        <tissue>Retina</tissue>
    </source>
</reference>
<reference key="2">
    <citation type="journal article" date="1995" name="Hum. Mol. Genet.">
        <title>Comparison of the positional cloning methods used to isolate the BRCA1 gene.</title>
        <authorList>
            <person name="Harshman K."/>
            <person name="Bell R."/>
            <person name="Rosenthal J."/>
            <person name="Katcher H."/>
            <person name="Miki Y."/>
            <person name="Swenson J."/>
            <person name="Gholami Z."/>
            <person name="Frye C."/>
            <person name="Ding W."/>
            <person name="Dayananth P."/>
            <person name="Eddington K."/>
            <person name="Norris F.H."/>
            <person name="Bristow P.K."/>
            <person name="Phelps R."/>
            <person name="Hattier T."/>
            <person name="Stone S."/>
            <person name="Shaffer D."/>
            <person name="Bayer S."/>
            <person name="Hussey C."/>
            <person name="Tran T."/>
            <person name="Lai M."/>
            <person name="Rosteck P.R. Jr."/>
            <person name="Skolnick M.H."/>
            <person name="Shattuck-Eidens D."/>
            <person name="Kamb A."/>
        </authorList>
    </citation>
    <scope>NUCLEOTIDE SEQUENCE [MRNA]</scope>
    <source>
        <tissue>Ovary</tissue>
    </source>
</reference>
<reference key="3">
    <citation type="submission" date="2001-04" db="EMBL/GenBank/DDBJ databases">
        <title>Two brain-related proteins are a tumor-rejection antigen recognized by HLA-A2-restriction.</title>
        <authorList>
            <person name="Tuda N."/>
            <person name="Shichijo S."/>
            <person name="Itoh K."/>
        </authorList>
    </citation>
    <scope>NUCLEOTIDE SEQUENCE [MRNA]</scope>
</reference>
<reference key="4">
    <citation type="journal article" date="2004" name="Nat. Genet.">
        <title>Complete sequencing and characterization of 21,243 full-length human cDNAs.</title>
        <authorList>
            <person name="Ota T."/>
            <person name="Suzuki Y."/>
            <person name="Nishikawa T."/>
            <person name="Otsuki T."/>
            <person name="Sugiyama T."/>
            <person name="Irie R."/>
            <person name="Wakamatsu A."/>
            <person name="Hayashi K."/>
            <person name="Sato H."/>
            <person name="Nagai K."/>
            <person name="Kimura K."/>
            <person name="Makita H."/>
            <person name="Sekine M."/>
            <person name="Obayashi M."/>
            <person name="Nishi T."/>
            <person name="Shibahara T."/>
            <person name="Tanaka T."/>
            <person name="Ishii S."/>
            <person name="Yamamoto J."/>
            <person name="Saito K."/>
            <person name="Kawai Y."/>
            <person name="Isono Y."/>
            <person name="Nakamura Y."/>
            <person name="Nagahari K."/>
            <person name="Murakami K."/>
            <person name="Yasuda T."/>
            <person name="Iwayanagi T."/>
            <person name="Wagatsuma M."/>
            <person name="Shiratori A."/>
            <person name="Sudo H."/>
            <person name="Hosoiri T."/>
            <person name="Kaku Y."/>
            <person name="Kodaira H."/>
            <person name="Kondo H."/>
            <person name="Sugawara M."/>
            <person name="Takahashi M."/>
            <person name="Kanda K."/>
            <person name="Yokoi T."/>
            <person name="Furuya T."/>
            <person name="Kikkawa E."/>
            <person name="Omura Y."/>
            <person name="Abe K."/>
            <person name="Kamihara K."/>
            <person name="Katsuta N."/>
            <person name="Sato K."/>
            <person name="Tanikawa M."/>
            <person name="Yamazaki M."/>
            <person name="Ninomiya K."/>
            <person name="Ishibashi T."/>
            <person name="Yamashita H."/>
            <person name="Murakawa K."/>
            <person name="Fujimori K."/>
            <person name="Tanai H."/>
            <person name="Kimata M."/>
            <person name="Watanabe M."/>
            <person name="Hiraoka S."/>
            <person name="Chiba Y."/>
            <person name="Ishida S."/>
            <person name="Ono Y."/>
            <person name="Takiguchi S."/>
            <person name="Watanabe S."/>
            <person name="Yosida M."/>
            <person name="Hotuta T."/>
            <person name="Kusano J."/>
            <person name="Kanehori K."/>
            <person name="Takahashi-Fujii A."/>
            <person name="Hara H."/>
            <person name="Tanase T.-O."/>
            <person name="Nomura Y."/>
            <person name="Togiya S."/>
            <person name="Komai F."/>
            <person name="Hara R."/>
            <person name="Takeuchi K."/>
            <person name="Arita M."/>
            <person name="Imose N."/>
            <person name="Musashino K."/>
            <person name="Yuuki H."/>
            <person name="Oshima A."/>
            <person name="Sasaki N."/>
            <person name="Aotsuka S."/>
            <person name="Yoshikawa Y."/>
            <person name="Matsunawa H."/>
            <person name="Ichihara T."/>
            <person name="Shiohata N."/>
            <person name="Sano S."/>
            <person name="Moriya S."/>
            <person name="Momiyama H."/>
            <person name="Satoh N."/>
            <person name="Takami S."/>
            <person name="Terashima Y."/>
            <person name="Suzuki O."/>
            <person name="Nakagawa S."/>
            <person name="Senoh A."/>
            <person name="Mizoguchi H."/>
            <person name="Goto Y."/>
            <person name="Shimizu F."/>
            <person name="Wakebe H."/>
            <person name="Hishigaki H."/>
            <person name="Watanabe T."/>
            <person name="Sugiyama A."/>
            <person name="Takemoto M."/>
            <person name="Kawakami B."/>
            <person name="Yamazaki M."/>
            <person name="Watanabe K."/>
            <person name="Kumagai A."/>
            <person name="Itakura S."/>
            <person name="Fukuzumi Y."/>
            <person name="Fujimori Y."/>
            <person name="Komiyama M."/>
            <person name="Tashiro H."/>
            <person name="Tanigami A."/>
            <person name="Fujiwara T."/>
            <person name="Ono T."/>
            <person name="Yamada K."/>
            <person name="Fujii Y."/>
            <person name="Ozaki K."/>
            <person name="Hirao M."/>
            <person name="Ohmori Y."/>
            <person name="Kawabata A."/>
            <person name="Hikiji T."/>
            <person name="Kobatake N."/>
            <person name="Inagaki H."/>
            <person name="Ikema Y."/>
            <person name="Okamoto S."/>
            <person name="Okitani R."/>
            <person name="Kawakami T."/>
            <person name="Noguchi S."/>
            <person name="Itoh T."/>
            <person name="Shigeta K."/>
            <person name="Senba T."/>
            <person name="Matsumura K."/>
            <person name="Nakajima Y."/>
            <person name="Mizuno T."/>
            <person name="Morinaga M."/>
            <person name="Sasaki M."/>
            <person name="Togashi T."/>
            <person name="Oyama M."/>
            <person name="Hata H."/>
            <person name="Watanabe M."/>
            <person name="Komatsu T."/>
            <person name="Mizushima-Sugano J."/>
            <person name="Satoh T."/>
            <person name="Shirai Y."/>
            <person name="Takahashi Y."/>
            <person name="Nakagawa K."/>
            <person name="Okumura K."/>
            <person name="Nagase T."/>
            <person name="Nomura N."/>
            <person name="Kikuchi H."/>
            <person name="Masuho Y."/>
            <person name="Yamashita R."/>
            <person name="Nakai K."/>
            <person name="Yada T."/>
            <person name="Nakamura Y."/>
            <person name="Ohara O."/>
            <person name="Isogai T."/>
            <person name="Sugano S."/>
        </authorList>
    </citation>
    <scope>NUCLEOTIDE SEQUENCE [LARGE SCALE MRNA]</scope>
</reference>
<reference key="5">
    <citation type="submission" date="2005-09" db="EMBL/GenBank/DDBJ databases">
        <authorList>
            <person name="Mural R.J."/>
            <person name="Istrail S."/>
            <person name="Sutton G.G."/>
            <person name="Florea L."/>
            <person name="Halpern A.L."/>
            <person name="Mobarry C.M."/>
            <person name="Lippert R."/>
            <person name="Walenz B."/>
            <person name="Shatkay H."/>
            <person name="Dew I."/>
            <person name="Miller J.R."/>
            <person name="Flanigan M.J."/>
            <person name="Edwards N.J."/>
            <person name="Bolanos R."/>
            <person name="Fasulo D."/>
            <person name="Halldorsson B.V."/>
            <person name="Hannenhalli S."/>
            <person name="Turner R."/>
            <person name="Yooseph S."/>
            <person name="Lu F."/>
            <person name="Nusskern D.R."/>
            <person name="Shue B.C."/>
            <person name="Zheng X.H."/>
            <person name="Zhong F."/>
            <person name="Delcher A.L."/>
            <person name="Huson D.H."/>
            <person name="Kravitz S.A."/>
            <person name="Mouchard L."/>
            <person name="Reinert K."/>
            <person name="Remington K.A."/>
            <person name="Clark A.G."/>
            <person name="Waterman M.S."/>
            <person name="Eichler E.E."/>
            <person name="Adams M.D."/>
            <person name="Hunkapiller M.W."/>
            <person name="Myers E.W."/>
            <person name="Venter J.C."/>
        </authorList>
    </citation>
    <scope>NUCLEOTIDE SEQUENCE [LARGE SCALE GENOMIC DNA]</scope>
</reference>
<reference key="6">
    <citation type="journal article" date="2004" name="Genome Res.">
        <title>The status, quality, and expansion of the NIH full-length cDNA project: the Mammalian Gene Collection (MGC).</title>
        <authorList>
            <consortium name="The MGC Project Team"/>
        </authorList>
    </citation>
    <scope>NUCLEOTIDE SEQUENCE [LARGE SCALE MRNA]</scope>
    <source>
        <tissue>Brain</tissue>
    </source>
</reference>
<reference key="7">
    <citation type="journal article" date="2000" name="J. Cell Biol.">
        <title>ADP ribosylation factor-like protein 2 (Arl2) regulates the interaction of tubulin-folding cofactor D with native tubulin.</title>
        <authorList>
            <person name="Bhamidipati A."/>
            <person name="Lewis S.A."/>
            <person name="Cowan N.J."/>
        </authorList>
    </citation>
    <scope>LACK OF INTERACTION WITH ARL4D</scope>
</reference>
<reference key="8">
    <citation type="journal article" date="2007" name="Curr. Biol.">
        <title>The Arl4 family of small G proteins can recruit the cytohesin Arf6 exchange factors to the plasma membrane.</title>
        <authorList>
            <person name="Hofmann I."/>
            <person name="Thompson A."/>
            <person name="Sanderson C.M."/>
            <person name="Munro S."/>
        </authorList>
    </citation>
    <scope>FUNCTION</scope>
    <scope>INTERACTION WITH CYTH2</scope>
    <scope>SUBCELLULAR LOCATION</scope>
</reference>
<sequence>MGNHLTEMAPTASSFLPHFQALHVVVIGLDSAGKTSLLYRLKFKEFVQSVPTKGFNTEKIRVPLGGSRGITFQVWDVGGQEKLRPLWRSYTRRTDGLVFVVDAAEAERLEEAKVELHRISRASDNQGVPVLVLANKQDQPGALSAAEVEKRLAVRELAAATLTHVQGCSAVDGLGLQQGLERLYEMILKRKKAARGGKKRR</sequence>
<gene>
    <name type="primary">ARL4D</name>
    <name type="synonym">ARF4L</name>
</gene>
<evidence type="ECO:0000250" key="1"/>
<evidence type="ECO:0000255" key="2"/>
<evidence type="ECO:0000269" key="3">
    <source>
    </source>
</evidence>
<evidence type="ECO:0000269" key="4">
    <source>
    </source>
</evidence>
<evidence type="ECO:0000305" key="5"/>